<proteinExistence type="inferred from homology"/>
<name>PURT_PSEPF</name>
<comment type="function">
    <text evidence="1">Involved in the de novo purine biosynthesis. Catalyzes the transfer of formate to 5-phospho-ribosyl-glycinamide (GAR), producing 5-phospho-ribosyl-N-formylglycinamide (FGAR). Formate is provided by PurU via hydrolysis of 10-formyl-tetrahydrofolate.</text>
</comment>
<comment type="catalytic activity">
    <reaction evidence="1">
        <text>N(1)-(5-phospho-beta-D-ribosyl)glycinamide + formate + ATP = N(2)-formyl-N(1)-(5-phospho-beta-D-ribosyl)glycinamide + ADP + phosphate + H(+)</text>
        <dbReference type="Rhea" id="RHEA:24829"/>
        <dbReference type="ChEBI" id="CHEBI:15378"/>
        <dbReference type="ChEBI" id="CHEBI:15740"/>
        <dbReference type="ChEBI" id="CHEBI:30616"/>
        <dbReference type="ChEBI" id="CHEBI:43474"/>
        <dbReference type="ChEBI" id="CHEBI:143788"/>
        <dbReference type="ChEBI" id="CHEBI:147286"/>
        <dbReference type="ChEBI" id="CHEBI:456216"/>
        <dbReference type="EC" id="6.3.1.21"/>
    </reaction>
    <physiologicalReaction direction="left-to-right" evidence="1">
        <dbReference type="Rhea" id="RHEA:24830"/>
    </physiologicalReaction>
</comment>
<comment type="pathway">
    <text evidence="1">Purine metabolism; IMP biosynthesis via de novo pathway; N(2)-formyl-N(1)-(5-phospho-D-ribosyl)glycinamide from N(1)-(5-phospho-D-ribosyl)glycinamide (formate route): step 1/1.</text>
</comment>
<comment type="subunit">
    <text evidence="1">Homodimer.</text>
</comment>
<comment type="similarity">
    <text evidence="1">Belongs to the PurK/PurT family.</text>
</comment>
<reference key="1">
    <citation type="journal article" date="2009" name="Genome Biol.">
        <title>Genomic and genetic analyses of diversity and plant interactions of Pseudomonas fluorescens.</title>
        <authorList>
            <person name="Silby M.W."/>
            <person name="Cerdeno-Tarraga A.M."/>
            <person name="Vernikos G.S."/>
            <person name="Giddens S.R."/>
            <person name="Jackson R.W."/>
            <person name="Preston G.M."/>
            <person name="Zhang X.-X."/>
            <person name="Moon C.D."/>
            <person name="Gehrig S.M."/>
            <person name="Godfrey S.A.C."/>
            <person name="Knight C.G."/>
            <person name="Malone J.G."/>
            <person name="Robinson Z."/>
            <person name="Spiers A.J."/>
            <person name="Harris S."/>
            <person name="Challis G.L."/>
            <person name="Yaxley A.M."/>
            <person name="Harris D."/>
            <person name="Seeger K."/>
            <person name="Murphy L."/>
            <person name="Rutter S."/>
            <person name="Squares R."/>
            <person name="Quail M.A."/>
            <person name="Saunders E."/>
            <person name="Mavromatis K."/>
            <person name="Brettin T.S."/>
            <person name="Bentley S.D."/>
            <person name="Hothersall J."/>
            <person name="Stephens E."/>
            <person name="Thomas C.M."/>
            <person name="Parkhill J."/>
            <person name="Levy S.B."/>
            <person name="Rainey P.B."/>
            <person name="Thomson N.R."/>
        </authorList>
    </citation>
    <scope>NUCLEOTIDE SEQUENCE [LARGE SCALE GENOMIC DNA]</scope>
    <source>
        <strain>Pf0-1</strain>
    </source>
</reference>
<sequence>MTRIGTPLSPTATRVLLCGCGELGKEVVIELQRLGVEVIAVDRYANAPAMQVAHRSHVINMLDGAALRAVIEAEKPHFIVPEIEAIATATLVALEAEGFTVIPTARAAQLTMNREGIRRLAAEELDLPTSPYHFADTFEDYSKAVQDLGFPCVVKPVMSSSGKGQSLLRSADDVQKAWDYAQEGGRAGKGRVIIEGFIDFDYEITLLTVRHVGGTTFCAPVGHRQEKGDYQESWQPQAMSPVALAESERVAKAVTEALGGRGLFGVELFIKGDQVWFSEVSPRPHDTGLVTLISQDLSQFALHARAILGLPVPLIRQFGPSASAVILVEGQSTQTAFANLGAALSEPDTALRLFGKPEVNGQRRMGVALARDESIEAARAKATRASQAVVVEL</sequence>
<protein>
    <recommendedName>
        <fullName evidence="1">Formate-dependent phosphoribosylglycinamide formyltransferase</fullName>
        <ecNumber evidence="1">6.3.1.21</ecNumber>
    </recommendedName>
    <alternativeName>
        <fullName evidence="1">5'-phosphoribosylglycinamide transformylase 2</fullName>
    </alternativeName>
    <alternativeName>
        <fullName evidence="1">Formate-dependent GAR transformylase</fullName>
    </alternativeName>
    <alternativeName>
        <fullName evidence="1">GAR transformylase 2</fullName>
        <shortName evidence="1">GART 2</shortName>
    </alternativeName>
    <alternativeName>
        <fullName evidence="1">Non-folate glycinamide ribonucleotide transformylase</fullName>
    </alternativeName>
    <alternativeName>
        <fullName evidence="1">Phosphoribosylglycinamide formyltransferase 2</fullName>
    </alternativeName>
</protein>
<evidence type="ECO:0000255" key="1">
    <source>
        <dbReference type="HAMAP-Rule" id="MF_01643"/>
    </source>
</evidence>
<keyword id="KW-0067">ATP-binding</keyword>
<keyword id="KW-0436">Ligase</keyword>
<keyword id="KW-0460">Magnesium</keyword>
<keyword id="KW-0479">Metal-binding</keyword>
<keyword id="KW-0547">Nucleotide-binding</keyword>
<keyword id="KW-0658">Purine biosynthesis</keyword>
<dbReference type="EC" id="6.3.1.21" evidence="1"/>
<dbReference type="EMBL" id="CP000094">
    <property type="protein sequence ID" value="ABA72757.1"/>
    <property type="molecule type" value="Genomic_DNA"/>
</dbReference>
<dbReference type="RefSeq" id="WP_011332608.1">
    <property type="nucleotide sequence ID" value="NC_007492.2"/>
</dbReference>
<dbReference type="SMR" id="Q3KHJ9"/>
<dbReference type="KEGG" id="pfo:Pfl01_1014"/>
<dbReference type="eggNOG" id="COG0027">
    <property type="taxonomic scope" value="Bacteria"/>
</dbReference>
<dbReference type="HOGENOM" id="CLU_011534_1_3_6"/>
<dbReference type="UniPathway" id="UPA00074">
    <property type="reaction ID" value="UER00127"/>
</dbReference>
<dbReference type="Proteomes" id="UP000002704">
    <property type="component" value="Chromosome"/>
</dbReference>
<dbReference type="GO" id="GO:0005829">
    <property type="term" value="C:cytosol"/>
    <property type="evidence" value="ECO:0007669"/>
    <property type="project" value="TreeGrafter"/>
</dbReference>
<dbReference type="GO" id="GO:0005524">
    <property type="term" value="F:ATP binding"/>
    <property type="evidence" value="ECO:0007669"/>
    <property type="project" value="UniProtKB-UniRule"/>
</dbReference>
<dbReference type="GO" id="GO:0000287">
    <property type="term" value="F:magnesium ion binding"/>
    <property type="evidence" value="ECO:0007669"/>
    <property type="project" value="InterPro"/>
</dbReference>
<dbReference type="GO" id="GO:0043815">
    <property type="term" value="F:phosphoribosylglycinamide formyltransferase 2 activity"/>
    <property type="evidence" value="ECO:0007669"/>
    <property type="project" value="UniProtKB-UniRule"/>
</dbReference>
<dbReference type="GO" id="GO:0004644">
    <property type="term" value="F:phosphoribosylglycinamide formyltransferase activity"/>
    <property type="evidence" value="ECO:0007669"/>
    <property type="project" value="InterPro"/>
</dbReference>
<dbReference type="GO" id="GO:0006189">
    <property type="term" value="P:'de novo' IMP biosynthetic process"/>
    <property type="evidence" value="ECO:0007669"/>
    <property type="project" value="UniProtKB-UniRule"/>
</dbReference>
<dbReference type="FunFam" id="3.30.1490.20:FF:000013">
    <property type="entry name" value="Formate-dependent phosphoribosylglycinamide formyltransferase"/>
    <property type="match status" value="1"/>
</dbReference>
<dbReference type="FunFam" id="3.30.470.20:FF:000027">
    <property type="entry name" value="Formate-dependent phosphoribosylglycinamide formyltransferase"/>
    <property type="match status" value="1"/>
</dbReference>
<dbReference type="FunFam" id="3.40.50.20:FF:000007">
    <property type="entry name" value="Formate-dependent phosphoribosylglycinamide formyltransferase"/>
    <property type="match status" value="1"/>
</dbReference>
<dbReference type="Gene3D" id="3.40.50.20">
    <property type="match status" value="1"/>
</dbReference>
<dbReference type="Gene3D" id="3.30.1490.20">
    <property type="entry name" value="ATP-grasp fold, A domain"/>
    <property type="match status" value="1"/>
</dbReference>
<dbReference type="Gene3D" id="3.30.470.20">
    <property type="entry name" value="ATP-grasp fold, B domain"/>
    <property type="match status" value="1"/>
</dbReference>
<dbReference type="HAMAP" id="MF_01643">
    <property type="entry name" value="PurT"/>
    <property type="match status" value="1"/>
</dbReference>
<dbReference type="InterPro" id="IPR011761">
    <property type="entry name" value="ATP-grasp"/>
</dbReference>
<dbReference type="InterPro" id="IPR003135">
    <property type="entry name" value="ATP-grasp_carboxylate-amine"/>
</dbReference>
<dbReference type="InterPro" id="IPR013815">
    <property type="entry name" value="ATP_grasp_subdomain_1"/>
</dbReference>
<dbReference type="InterPro" id="IPR016185">
    <property type="entry name" value="PreATP-grasp_dom_sf"/>
</dbReference>
<dbReference type="InterPro" id="IPR005862">
    <property type="entry name" value="PurT"/>
</dbReference>
<dbReference type="InterPro" id="IPR054350">
    <property type="entry name" value="PurT/PurK_preATP-grasp"/>
</dbReference>
<dbReference type="InterPro" id="IPR048740">
    <property type="entry name" value="PurT_C"/>
</dbReference>
<dbReference type="NCBIfam" id="NF006766">
    <property type="entry name" value="PRK09288.1"/>
    <property type="match status" value="1"/>
</dbReference>
<dbReference type="NCBIfam" id="TIGR01142">
    <property type="entry name" value="purT"/>
    <property type="match status" value="1"/>
</dbReference>
<dbReference type="PANTHER" id="PTHR43055">
    <property type="entry name" value="FORMATE-DEPENDENT PHOSPHORIBOSYLGLYCINAMIDE FORMYLTRANSFERASE"/>
    <property type="match status" value="1"/>
</dbReference>
<dbReference type="PANTHER" id="PTHR43055:SF1">
    <property type="entry name" value="FORMATE-DEPENDENT PHOSPHORIBOSYLGLYCINAMIDE FORMYLTRANSFERASE"/>
    <property type="match status" value="1"/>
</dbReference>
<dbReference type="Pfam" id="PF02222">
    <property type="entry name" value="ATP-grasp"/>
    <property type="match status" value="1"/>
</dbReference>
<dbReference type="Pfam" id="PF21244">
    <property type="entry name" value="PurT_C"/>
    <property type="match status" value="1"/>
</dbReference>
<dbReference type="Pfam" id="PF22660">
    <property type="entry name" value="RS_preATP-grasp-like"/>
    <property type="match status" value="1"/>
</dbReference>
<dbReference type="SUPFAM" id="SSF56059">
    <property type="entry name" value="Glutathione synthetase ATP-binding domain-like"/>
    <property type="match status" value="1"/>
</dbReference>
<dbReference type="SUPFAM" id="SSF52440">
    <property type="entry name" value="PreATP-grasp domain"/>
    <property type="match status" value="1"/>
</dbReference>
<dbReference type="PROSITE" id="PS50975">
    <property type="entry name" value="ATP_GRASP"/>
    <property type="match status" value="1"/>
</dbReference>
<gene>
    <name evidence="1" type="primary">purT</name>
    <name type="ordered locus">Pfl01_1014</name>
</gene>
<accession>Q3KHJ9</accession>
<feature type="chain" id="PRO_0000319212" description="Formate-dependent phosphoribosylglycinamide formyltransferase">
    <location>
        <begin position="1"/>
        <end position="393"/>
    </location>
</feature>
<feature type="domain" description="ATP-grasp" evidence="1">
    <location>
        <begin position="119"/>
        <end position="308"/>
    </location>
</feature>
<feature type="binding site" evidence="1">
    <location>
        <begin position="22"/>
        <end position="23"/>
    </location>
    <ligand>
        <name>N(1)-(5-phospho-beta-D-ribosyl)glycinamide</name>
        <dbReference type="ChEBI" id="CHEBI:143788"/>
    </ligand>
</feature>
<feature type="binding site" evidence="1">
    <location>
        <position position="82"/>
    </location>
    <ligand>
        <name>N(1)-(5-phospho-beta-D-ribosyl)glycinamide</name>
        <dbReference type="ChEBI" id="CHEBI:143788"/>
    </ligand>
</feature>
<feature type="binding site" evidence="1">
    <location>
        <position position="114"/>
    </location>
    <ligand>
        <name>ATP</name>
        <dbReference type="ChEBI" id="CHEBI:30616"/>
    </ligand>
</feature>
<feature type="binding site" evidence="1">
    <location>
        <position position="155"/>
    </location>
    <ligand>
        <name>ATP</name>
        <dbReference type="ChEBI" id="CHEBI:30616"/>
    </ligand>
</feature>
<feature type="binding site" evidence="1">
    <location>
        <begin position="160"/>
        <end position="165"/>
    </location>
    <ligand>
        <name>ATP</name>
        <dbReference type="ChEBI" id="CHEBI:30616"/>
    </ligand>
</feature>
<feature type="binding site" evidence="1">
    <location>
        <begin position="195"/>
        <end position="198"/>
    </location>
    <ligand>
        <name>ATP</name>
        <dbReference type="ChEBI" id="CHEBI:30616"/>
    </ligand>
</feature>
<feature type="binding site" evidence="1">
    <location>
        <position position="203"/>
    </location>
    <ligand>
        <name>ATP</name>
        <dbReference type="ChEBI" id="CHEBI:30616"/>
    </ligand>
</feature>
<feature type="binding site" evidence="1">
    <location>
        <position position="267"/>
    </location>
    <ligand>
        <name>Mg(2+)</name>
        <dbReference type="ChEBI" id="CHEBI:18420"/>
    </ligand>
</feature>
<feature type="binding site" evidence="1">
    <location>
        <position position="279"/>
    </location>
    <ligand>
        <name>Mg(2+)</name>
        <dbReference type="ChEBI" id="CHEBI:18420"/>
    </ligand>
</feature>
<feature type="binding site" evidence="1">
    <location>
        <position position="286"/>
    </location>
    <ligand>
        <name>N(1)-(5-phospho-beta-D-ribosyl)glycinamide</name>
        <dbReference type="ChEBI" id="CHEBI:143788"/>
    </ligand>
</feature>
<feature type="binding site" evidence="1">
    <location>
        <position position="356"/>
    </location>
    <ligand>
        <name>N(1)-(5-phospho-beta-D-ribosyl)glycinamide</name>
        <dbReference type="ChEBI" id="CHEBI:143788"/>
    </ligand>
</feature>
<feature type="binding site" evidence="1">
    <location>
        <begin position="363"/>
        <end position="364"/>
    </location>
    <ligand>
        <name>N(1)-(5-phospho-beta-D-ribosyl)glycinamide</name>
        <dbReference type="ChEBI" id="CHEBI:143788"/>
    </ligand>
</feature>
<organism>
    <name type="scientific">Pseudomonas fluorescens (strain Pf0-1)</name>
    <dbReference type="NCBI Taxonomy" id="205922"/>
    <lineage>
        <taxon>Bacteria</taxon>
        <taxon>Pseudomonadati</taxon>
        <taxon>Pseudomonadota</taxon>
        <taxon>Gammaproteobacteria</taxon>
        <taxon>Pseudomonadales</taxon>
        <taxon>Pseudomonadaceae</taxon>
        <taxon>Pseudomonas</taxon>
    </lineage>
</organism>